<organism>
    <name type="scientific">Herpetosiphon aurantiacus (strain ATCC 23779 / DSM 785 / 114-95)</name>
    <dbReference type="NCBI Taxonomy" id="316274"/>
    <lineage>
        <taxon>Bacteria</taxon>
        <taxon>Bacillati</taxon>
        <taxon>Chloroflexota</taxon>
        <taxon>Chloroflexia</taxon>
        <taxon>Herpetosiphonales</taxon>
        <taxon>Herpetosiphonaceae</taxon>
        <taxon>Herpetosiphon</taxon>
    </lineage>
</organism>
<gene>
    <name evidence="1" type="primary">minE</name>
    <name type="ordered locus">Haur_3423</name>
</gene>
<name>MINE_HERA2</name>
<protein>
    <recommendedName>
        <fullName evidence="1">Cell division topological specificity factor</fullName>
    </recommendedName>
</protein>
<evidence type="ECO:0000255" key="1">
    <source>
        <dbReference type="HAMAP-Rule" id="MF_00262"/>
    </source>
</evidence>
<keyword id="KW-0131">Cell cycle</keyword>
<keyword id="KW-0132">Cell division</keyword>
<reference key="1">
    <citation type="journal article" date="2011" name="Stand. Genomic Sci.">
        <title>Complete genome sequence of the filamentous gliding predatory bacterium Herpetosiphon aurantiacus type strain (114-95(T)).</title>
        <authorList>
            <person name="Kiss H."/>
            <person name="Nett M."/>
            <person name="Domin N."/>
            <person name="Martin K."/>
            <person name="Maresca J.A."/>
            <person name="Copeland A."/>
            <person name="Lapidus A."/>
            <person name="Lucas S."/>
            <person name="Berry K.W."/>
            <person name="Glavina Del Rio T."/>
            <person name="Dalin E."/>
            <person name="Tice H."/>
            <person name="Pitluck S."/>
            <person name="Richardson P."/>
            <person name="Bruce D."/>
            <person name="Goodwin L."/>
            <person name="Han C."/>
            <person name="Detter J.C."/>
            <person name="Schmutz J."/>
            <person name="Brettin T."/>
            <person name="Land M."/>
            <person name="Hauser L."/>
            <person name="Kyrpides N.C."/>
            <person name="Ivanova N."/>
            <person name="Goeker M."/>
            <person name="Woyke T."/>
            <person name="Klenk H.P."/>
            <person name="Bryant D.A."/>
        </authorList>
    </citation>
    <scope>NUCLEOTIDE SEQUENCE [LARGE SCALE GENOMIC DNA]</scope>
    <source>
        <strain>ATCC 23779 / DSM 785 / 114-95</strain>
    </source>
</reference>
<feature type="chain" id="PRO_1000114226" description="Cell division topological specificity factor">
    <location>
        <begin position="1"/>
        <end position="87"/>
    </location>
</feature>
<comment type="function">
    <text evidence="1">Prevents the cell division inhibition by proteins MinC and MinD at internal division sites while permitting inhibition at polar sites. This ensures cell division at the proper site by restricting the formation of a division septum at the midpoint of the long axis of the cell.</text>
</comment>
<comment type="similarity">
    <text evidence="1">Belongs to the MinE family.</text>
</comment>
<proteinExistence type="inferred from homology"/>
<sequence length="87" mass="9915">MGLLDNLFGRKQQNSSSVAKERLLTVLVHDRVHLTPHDMEEMKREIIAVIERYVEVTNPEAIEVTLTRGEAADHLKADIPLGRSRQQ</sequence>
<dbReference type="EMBL" id="CP000875">
    <property type="protein sequence ID" value="ABX06059.1"/>
    <property type="molecule type" value="Genomic_DNA"/>
</dbReference>
<dbReference type="SMR" id="A9B3S3"/>
<dbReference type="STRING" id="316274.Haur_3423"/>
<dbReference type="KEGG" id="hau:Haur_3423"/>
<dbReference type="eggNOG" id="COG0851">
    <property type="taxonomic scope" value="Bacteria"/>
</dbReference>
<dbReference type="HOGENOM" id="CLU_137929_1_1_0"/>
<dbReference type="InParanoid" id="A9B3S3"/>
<dbReference type="Proteomes" id="UP000000787">
    <property type="component" value="Chromosome"/>
</dbReference>
<dbReference type="GO" id="GO:0051301">
    <property type="term" value="P:cell division"/>
    <property type="evidence" value="ECO:0007669"/>
    <property type="project" value="UniProtKB-KW"/>
</dbReference>
<dbReference type="GO" id="GO:0032955">
    <property type="term" value="P:regulation of division septum assembly"/>
    <property type="evidence" value="ECO:0007669"/>
    <property type="project" value="InterPro"/>
</dbReference>
<dbReference type="Gene3D" id="3.30.1070.10">
    <property type="entry name" value="Cell division topological specificity factor MinE"/>
    <property type="match status" value="1"/>
</dbReference>
<dbReference type="HAMAP" id="MF_00262">
    <property type="entry name" value="MinE"/>
    <property type="match status" value="1"/>
</dbReference>
<dbReference type="InterPro" id="IPR005527">
    <property type="entry name" value="MinE"/>
</dbReference>
<dbReference type="InterPro" id="IPR036707">
    <property type="entry name" value="MinE_sf"/>
</dbReference>
<dbReference type="NCBIfam" id="TIGR01215">
    <property type="entry name" value="minE"/>
    <property type="match status" value="1"/>
</dbReference>
<dbReference type="NCBIfam" id="NF001422">
    <property type="entry name" value="PRK00296.1"/>
    <property type="match status" value="1"/>
</dbReference>
<dbReference type="Pfam" id="PF03776">
    <property type="entry name" value="MinE"/>
    <property type="match status" value="1"/>
</dbReference>
<dbReference type="SUPFAM" id="SSF55229">
    <property type="entry name" value="Cell division protein MinE topological specificity domain"/>
    <property type="match status" value="1"/>
</dbReference>
<accession>A9B3S3</accession>